<protein>
    <recommendedName>
        <fullName evidence="1">Peptide deformylase</fullName>
        <shortName evidence="1">PDF</shortName>
        <ecNumber evidence="1">3.5.1.88</ecNumber>
    </recommendedName>
    <alternativeName>
        <fullName evidence="1">Polypeptide deformylase</fullName>
    </alternativeName>
</protein>
<organism>
    <name type="scientific">Wigglesworthia glossinidia brevipalpis</name>
    <dbReference type="NCBI Taxonomy" id="36870"/>
    <lineage>
        <taxon>Bacteria</taxon>
        <taxon>Pseudomonadati</taxon>
        <taxon>Pseudomonadota</taxon>
        <taxon>Gammaproteobacteria</taxon>
        <taxon>Enterobacterales</taxon>
        <taxon>Erwiniaceae</taxon>
        <taxon>Wigglesworthia</taxon>
    </lineage>
</organism>
<sequence length="152" mass="17128">MSVLSILNYPNKKLRKIASNISLIDSEIKSLIKNMLETMYFNEGIGLAATQVDVHKRIIVIDISKNKNKPLILINPVFINKCGAQTFEEGCLSIPKKTAFVNRSKKVKIKAINCLGEEFLLKSKGLLATCIQHEMDHLIGKLFIDYIKPLKN</sequence>
<gene>
    <name evidence="1" type="primary">def</name>
    <name type="ordered locus">WIGBR4960</name>
</gene>
<accession>Q8D258</accession>
<name>DEF_WIGBR</name>
<proteinExistence type="inferred from homology"/>
<keyword id="KW-0378">Hydrolase</keyword>
<keyword id="KW-0408">Iron</keyword>
<keyword id="KW-0479">Metal-binding</keyword>
<keyword id="KW-0648">Protein biosynthesis</keyword>
<keyword id="KW-1185">Reference proteome</keyword>
<comment type="function">
    <text evidence="1">Removes the formyl group from the N-terminal Met of newly synthesized proteins. Requires at least a dipeptide for an efficient rate of reaction. N-terminal L-methionine is a prerequisite for activity but the enzyme has broad specificity at other positions.</text>
</comment>
<comment type="catalytic activity">
    <reaction evidence="1">
        <text>N-terminal N-formyl-L-methionyl-[peptide] + H2O = N-terminal L-methionyl-[peptide] + formate</text>
        <dbReference type="Rhea" id="RHEA:24420"/>
        <dbReference type="Rhea" id="RHEA-COMP:10639"/>
        <dbReference type="Rhea" id="RHEA-COMP:10640"/>
        <dbReference type="ChEBI" id="CHEBI:15377"/>
        <dbReference type="ChEBI" id="CHEBI:15740"/>
        <dbReference type="ChEBI" id="CHEBI:49298"/>
        <dbReference type="ChEBI" id="CHEBI:64731"/>
        <dbReference type="EC" id="3.5.1.88"/>
    </reaction>
</comment>
<comment type="cofactor">
    <cofactor evidence="1">
        <name>Fe(2+)</name>
        <dbReference type="ChEBI" id="CHEBI:29033"/>
    </cofactor>
    <text evidence="1">Binds 1 Fe(2+) ion.</text>
</comment>
<comment type="similarity">
    <text evidence="1">Belongs to the polypeptide deformylase family.</text>
</comment>
<reference key="1">
    <citation type="journal article" date="2002" name="Nat. Genet.">
        <title>Genome sequence of the endocellular obligate symbiont of tsetse flies, Wigglesworthia glossinidia.</title>
        <authorList>
            <person name="Akman L."/>
            <person name="Yamashita A."/>
            <person name="Watanabe H."/>
            <person name="Oshima K."/>
            <person name="Shiba T."/>
            <person name="Hattori M."/>
            <person name="Aksoy S."/>
        </authorList>
    </citation>
    <scope>NUCLEOTIDE SEQUENCE [LARGE SCALE GENOMIC DNA]</scope>
</reference>
<evidence type="ECO:0000255" key="1">
    <source>
        <dbReference type="HAMAP-Rule" id="MF_00163"/>
    </source>
</evidence>
<feature type="chain" id="PRO_0000082881" description="Peptide deformylase">
    <location>
        <begin position="1"/>
        <end position="152"/>
    </location>
</feature>
<feature type="active site" evidence="1">
    <location>
        <position position="134"/>
    </location>
</feature>
<feature type="binding site" evidence="1">
    <location>
        <position position="91"/>
    </location>
    <ligand>
        <name>Fe cation</name>
        <dbReference type="ChEBI" id="CHEBI:24875"/>
    </ligand>
</feature>
<feature type="binding site" evidence="1">
    <location>
        <position position="133"/>
    </location>
    <ligand>
        <name>Fe cation</name>
        <dbReference type="ChEBI" id="CHEBI:24875"/>
    </ligand>
</feature>
<feature type="binding site" evidence="1">
    <location>
        <position position="137"/>
    </location>
    <ligand>
        <name>Fe cation</name>
        <dbReference type="ChEBI" id="CHEBI:24875"/>
    </ligand>
</feature>
<dbReference type="EC" id="3.5.1.88" evidence="1"/>
<dbReference type="EMBL" id="BA000021">
    <property type="protein sequence ID" value="BAC24642.1"/>
    <property type="molecule type" value="Genomic_DNA"/>
</dbReference>
<dbReference type="SMR" id="Q8D258"/>
<dbReference type="STRING" id="36870.gene:10369000"/>
<dbReference type="KEGG" id="wbr:def"/>
<dbReference type="eggNOG" id="COG0242">
    <property type="taxonomic scope" value="Bacteria"/>
</dbReference>
<dbReference type="HOGENOM" id="CLU_061901_2_1_6"/>
<dbReference type="OrthoDB" id="9804313at2"/>
<dbReference type="Proteomes" id="UP000000562">
    <property type="component" value="Chromosome"/>
</dbReference>
<dbReference type="GO" id="GO:0046872">
    <property type="term" value="F:metal ion binding"/>
    <property type="evidence" value="ECO:0007669"/>
    <property type="project" value="UniProtKB-KW"/>
</dbReference>
<dbReference type="GO" id="GO:0042586">
    <property type="term" value="F:peptide deformylase activity"/>
    <property type="evidence" value="ECO:0007669"/>
    <property type="project" value="UniProtKB-UniRule"/>
</dbReference>
<dbReference type="GO" id="GO:0043686">
    <property type="term" value="P:co-translational protein modification"/>
    <property type="evidence" value="ECO:0007669"/>
    <property type="project" value="TreeGrafter"/>
</dbReference>
<dbReference type="GO" id="GO:0006412">
    <property type="term" value="P:translation"/>
    <property type="evidence" value="ECO:0007669"/>
    <property type="project" value="UniProtKB-UniRule"/>
</dbReference>
<dbReference type="CDD" id="cd00487">
    <property type="entry name" value="Pep_deformylase"/>
    <property type="match status" value="1"/>
</dbReference>
<dbReference type="Gene3D" id="3.90.45.10">
    <property type="entry name" value="Peptide deformylase"/>
    <property type="match status" value="1"/>
</dbReference>
<dbReference type="HAMAP" id="MF_00163">
    <property type="entry name" value="Pep_deformylase"/>
    <property type="match status" value="1"/>
</dbReference>
<dbReference type="InterPro" id="IPR023635">
    <property type="entry name" value="Peptide_deformylase"/>
</dbReference>
<dbReference type="InterPro" id="IPR036821">
    <property type="entry name" value="Peptide_deformylase_sf"/>
</dbReference>
<dbReference type="NCBIfam" id="TIGR00079">
    <property type="entry name" value="pept_deformyl"/>
    <property type="match status" value="1"/>
</dbReference>
<dbReference type="NCBIfam" id="NF001159">
    <property type="entry name" value="PRK00150.1-3"/>
    <property type="match status" value="1"/>
</dbReference>
<dbReference type="PANTHER" id="PTHR10458">
    <property type="entry name" value="PEPTIDE DEFORMYLASE"/>
    <property type="match status" value="1"/>
</dbReference>
<dbReference type="PANTHER" id="PTHR10458:SF21">
    <property type="entry name" value="PEPTIDE DEFORMYLASE"/>
    <property type="match status" value="1"/>
</dbReference>
<dbReference type="Pfam" id="PF01327">
    <property type="entry name" value="Pep_deformylase"/>
    <property type="match status" value="1"/>
</dbReference>
<dbReference type="PIRSF" id="PIRSF004749">
    <property type="entry name" value="Pep_def"/>
    <property type="match status" value="1"/>
</dbReference>
<dbReference type="PRINTS" id="PR01576">
    <property type="entry name" value="PDEFORMYLASE"/>
</dbReference>
<dbReference type="SUPFAM" id="SSF56420">
    <property type="entry name" value="Peptide deformylase"/>
    <property type="match status" value="1"/>
</dbReference>